<organism>
    <name type="scientific">Homo sapiens</name>
    <name type="common">Human</name>
    <dbReference type="NCBI Taxonomy" id="9606"/>
    <lineage>
        <taxon>Eukaryota</taxon>
        <taxon>Metazoa</taxon>
        <taxon>Chordata</taxon>
        <taxon>Craniata</taxon>
        <taxon>Vertebrata</taxon>
        <taxon>Euteleostomi</taxon>
        <taxon>Mammalia</taxon>
        <taxon>Eutheria</taxon>
        <taxon>Euarchontoglires</taxon>
        <taxon>Primates</taxon>
        <taxon>Haplorrhini</taxon>
        <taxon>Catarrhini</taxon>
        <taxon>Hominidae</taxon>
        <taxon>Homo</taxon>
    </lineage>
</organism>
<comment type="function">
    <text evidence="9">Regulatory subunit of the IKK complex. Probably recruits IkappaBalpha/NFKBIA to the complex. May be involved in the organization of the cytomatrix at the nerve terminals active zone (CAZ) which regulates neurotransmitter release. May be involved in vesicle trafficking at the CAZ. May be involved in Rab-6 regulated endosomes to Golgi transport.</text>
</comment>
<comment type="subunit">
    <text evidence="1 10 11 12">Part of a complex with CHUK, IKBKB and IKBKG. Interacts with CHUK, IKBKB and IKBKG. The interaction with IKBKG is independent of CHUK and IKBKB. Interacts with NFKBIA. Isoform 4 interacts with PPFIA1, and through its C-terminus with the PDZ domains of RIMS1 and RIMS2. Interacts with ERC2/CAST1. Interacts with the GTB-bound forms of RAB6A isoform 1 and isoform 2 and with RAB6B. The interaction was strongest with RAB6B, followed by RAB6A isoform 2 and weakest with RAB6A isoform 1 (By similarity). Interacts with SDCCAG8. Part of a cortical microtubule stabilization complex (CMSC) composed of KANK1, PPFIA1, PPFIBP1, ERC1/ELKS, PHLDB2/LL5beta, CLASPs, KIF21A and possibly additional interactors; within CMSCs KANK1 and PHLDB2/LL5beta appear to be the core components for targeting of microtubule-binding proteins KIF21A and CLASPs, whereas PPFIA1, PPFIBP1 and ERC1/ELKS serve as scaffolds for protein clustering.</text>
</comment>
<comment type="interaction">
    <interactant intactId="EBI-6920871">
        <id>Q8IUD2-2</id>
    </interactant>
    <interactant intactId="EBI-3647752">
        <id>Q8R0S4</id>
        <label>Cacnb4</label>
    </interactant>
    <organismsDiffer>true</organismsDiffer>
    <experiments>2</experiments>
</comment>
<comment type="interaction">
    <interactant intactId="EBI-9352449">
        <id>Q8IUD2-3</id>
    </interactant>
    <interactant intactId="EBI-3649474">
        <id>PRO_0000037573</id>
        <dbReference type="UniProtKB" id="P27958"/>
    </interactant>
    <organismsDiffer>true</organismsDiffer>
    <experiments>8</experiments>
</comment>
<comment type="interaction">
    <interactant intactId="EBI-9352501">
        <id>Q8IUD2-4</id>
    </interactant>
    <interactant intactId="EBI-3649474">
        <id>PRO_0000037573</id>
        <dbReference type="UniProtKB" id="P27958"/>
    </interactant>
    <organismsDiffer>true</organismsDiffer>
    <experiments>3</experiments>
</comment>
<comment type="subcellular location">
    <subcellularLocation>
        <location evidence="11">Cytoplasm</location>
        <location evidence="11">Cytoskeleton</location>
        <location evidence="11">Microtubule organizing center</location>
        <location evidence="11">Centrosome</location>
    </subcellularLocation>
    <subcellularLocation>
        <location evidence="2">Cytoplasm</location>
    </subcellularLocation>
    <subcellularLocation>
        <location evidence="1">Membrane</location>
        <topology evidence="1">Peripheral membrane protein</topology>
    </subcellularLocation>
    <subcellularLocation>
        <location evidence="1">Golgi apparatus membrane</location>
        <topology evidence="1">Peripheral membrane protein</topology>
    </subcellularLocation>
    <subcellularLocation>
        <location evidence="2">Presynaptic cell membrane</location>
    </subcellularLocation>
    <subcellularLocation>
        <location evidence="3">Cell projection</location>
        <location evidence="3">Podosome</location>
    </subcellularLocation>
    <text evidence="1 3">Recruited on Golgi membranes by RAB6A in a GTP-dependent manner (By similarity). Localized to the cortex of myotube podosomes (By similarity).</text>
</comment>
<comment type="alternative products">
    <event type="alternative splicing"/>
    <isoform>
        <id>Q8IUD2-1</id>
        <name>1</name>
        <name>ELKS epsilon</name>
        <sequence type="displayed"/>
    </isoform>
    <isoform>
        <id>Q8IUD2-2</id>
        <name>2</name>
        <name>ELKS beta</name>
        <sequence type="described" ref="VSP_011451 VSP_011452 VSP_011454 VSP_011455"/>
    </isoform>
    <isoform>
        <id>Q8IUD2-3</id>
        <name>3</name>
        <name>ELKS delta</name>
        <sequence type="described" ref="VSP_011451"/>
    </isoform>
    <isoform>
        <id>Q8IUD2-4</id>
        <name>4</name>
        <name>ELKS alpha</name>
        <sequence type="described" ref="VSP_011451 VSP_011452 VSP_011453 VSP_011454 VSP_011455"/>
    </isoform>
    <isoform>
        <id>Q8IUD2-5</id>
        <name>5</name>
        <name>ELKS gamma</name>
        <sequence type="described" ref="VSP_011450 VSP_011452 VSP_011454 VSP_011455"/>
    </isoform>
</comment>
<comment type="tissue specificity">
    <text evidence="8">Widely expressed. Isoform 2 and isoform 4 are abundantly expressed in brain. Isoform 1 and isoform 3 are predominantly expressed in testis and thyroid, and isoform 1 predominates in other tissues tested.</text>
</comment>
<comment type="disease">
    <text evidence="7">A chromosomal aberration involving ERC1/RAB6IP2 is found in papillary thyroid carcinomas (PTCs). Translocation t(10;12)(q11;p13) involving RET. In vitro, isoform 1, isoform 3 and isoform 5 participating in a ERC1-RET fusion protein activate tyrosine-protein kinase activity.</text>
</comment>
<comment type="miscellaneous">
    <molecule>Isoform 2</molecule>
    <text evidence="18">May be produced at very low levels due to a premature stop codon in the mRNA, leading to nonsense-mediated mRNA decay.</text>
</comment>
<comment type="miscellaneous">
    <molecule>Isoform 4</molecule>
    <text evidence="18">May be produced at very low levels due to a premature stop codon in the mRNA, leading to nonsense-mediated mRNA decay.</text>
</comment>
<comment type="miscellaneous">
    <molecule>Isoform 5</molecule>
    <text evidence="18">May be produced at very low levels due to a premature stop codon in the mRNA, leading to nonsense-mediated mRNA decay.</text>
</comment>
<comment type="sequence caution" evidence="18">
    <conflict type="miscellaneous discrepancy">
        <sequence resource="EMBL-CDS" id="AAH68006"/>
    </conflict>
    <text>Contaminating sequence. Potential poly-A sequence.</text>
</comment>
<comment type="sequence caution" evidence="18">
    <conflict type="erroneous initiation">
        <sequence resource="EMBL-CDS" id="BAA83033"/>
    </conflict>
    <text>Extended N-terminus.</text>
</comment>
<comment type="sequence caution" evidence="18">
    <conflict type="erroneous initiation">
        <sequence resource="EMBL-CDS" id="BAA90975"/>
    </conflict>
    <text>Truncated N-terminus.</text>
</comment>
<comment type="online information" name="Atlas of Genetics and Cytogenetics in Oncology and Haematology">
    <link uri="https://atlasgeneticsoncology.org/gene/503/ELKS"/>
</comment>
<sequence>MYGSARSVGKVEPSSQSPGRSPRLPRSPRLGHRRTNSTGGSSGSSVGGGSGKTLSMENIQSLNAAYATSGPMYLSDHENVGSETPKSTMTLGRSGGRLPYGVRMTAMGSSPNIASSGVASDTIAFGEHHLPPVSMASTVPHSLRQARDNTIMDLQTQLKEVLRENDLLRKDVEVKESKLSSSMNSIKTFWSPELKKERALRKDEASKITIWKEQYRVVQEENQHMQMTIQALQDELRIQRDLNQLFQQDSSSRTGEPCVAELTEENFQRLHAEHERQAKELFLLRKTLEEMELRIETQKQTLNARDESIKKLLEMLQSKGLSAKATEEDHERTRRLAEAEMHVHHLESLLEQKEKENSMLREEMHRRFENAPDSAKTKALQTVIEMKDSKISSMERGLRDLEEEIQMLKSNGALSTEEREEEMKQMEVYRSHSKFMKNKVEQLKEELSSKEAQWEELKKKAAGLQAEIGQVKQELSRKDTELLALQTKLETLTNQFSDSKQHIEVLKESLTAKEQRAAILQTEVDALRLRLEEKETMLNKKTKQIQDMAEEKGTQAGEIHDLKDMLDVKERKVNVLQKKIENLQEQLRDKEKQMSSLKERVKSLQADTTNTDTALTTLEEALAEKERTIERLKEQRDRDEREKQEEIDNYKKDLKDLKEKVSLLQGDLSEKEASLLDLKEHASSLASSGLKKDSRLKTLEIALEQKKEECLKMESQLKKAHEAALEARASPEMSDRIQHLEREITRYKDESSKAQAEVDRLLEILKEVENEKNDKDKKIAELERQVKDQNKKVANLKHKEQVEKKKSAQMLEEARRREDNLNDSSQQLQDSLRKKDDRIEELEEALRESVQITAEREMVLAQEESARTNAEKQVEELLMAMEKVKQELESMKAKLSSTQQSLAEKETHLTNLRAERRKHLEEVLEMKQEALLAAISEKDANIALLELSSSKKKTQEEVAALKREKDRLVQQLKQQTQNRMKLMADNYEDDHFKSSHSNQTNHKPSPDQIIQPLLELDQNRSKLKLYIGHLTTLCHDRDPLILRGLTPPASYNLDDDQAAWENELQKMTRGQLQDELEKGERDNAELQEFANAILQQIADHCPDILEQVVNALEESS</sequence>
<feature type="chain" id="PRO_0000097176" description="ELKS/Rab6-interacting/CAST family member 1">
    <location>
        <begin position="1"/>
        <end position="1116"/>
    </location>
</feature>
<feature type="domain" description="FIP-RBD" evidence="5">
    <location>
        <begin position="1046"/>
        <end position="1108"/>
    </location>
</feature>
<feature type="region of interest" description="Disordered" evidence="6">
    <location>
        <begin position="1"/>
        <end position="54"/>
    </location>
</feature>
<feature type="region of interest" description="Disordered" evidence="6">
    <location>
        <begin position="590"/>
        <end position="609"/>
    </location>
</feature>
<feature type="region of interest" description="Disordered" evidence="6">
    <location>
        <begin position="814"/>
        <end position="836"/>
    </location>
</feature>
<feature type="coiled-coil region" evidence="4">
    <location>
        <begin position="144"/>
        <end position="988"/>
    </location>
</feature>
<feature type="coiled-coil region" evidence="4">
    <location>
        <begin position="1060"/>
        <end position="1100"/>
    </location>
</feature>
<feature type="compositionally biased region" description="Low complexity" evidence="6">
    <location>
        <begin position="13"/>
        <end position="28"/>
    </location>
</feature>
<feature type="compositionally biased region" description="Gly residues" evidence="6">
    <location>
        <begin position="40"/>
        <end position="51"/>
    </location>
</feature>
<feature type="compositionally biased region" description="Basic and acidic residues" evidence="6">
    <location>
        <begin position="590"/>
        <end position="602"/>
    </location>
</feature>
<feature type="site" description="Breakpoint for translocation to form ERC1-RET oncogene">
    <location>
        <begin position="719"/>
        <end position="720"/>
    </location>
</feature>
<feature type="modified residue" description="N6-acetyllysine" evidence="3">
    <location>
        <position position="10"/>
    </location>
</feature>
<feature type="modified residue" description="Phosphoserine" evidence="19 23">
    <location>
        <position position="17"/>
    </location>
</feature>
<feature type="modified residue" description="Phosphoserine" evidence="19 23">
    <location>
        <position position="21"/>
    </location>
</feature>
<feature type="modified residue" description="Phosphoserine" evidence="22 24">
    <location>
        <position position="37"/>
    </location>
</feature>
<feature type="modified residue" description="Phosphothreonine" evidence="24">
    <location>
        <position position="38"/>
    </location>
</feature>
<feature type="modified residue" description="Phosphoserine" evidence="3">
    <location>
        <position position="55"/>
    </location>
</feature>
<feature type="modified residue" description="Phosphoserine" evidence="20">
    <location>
        <position position="75"/>
    </location>
</feature>
<feature type="modified residue" description="Phosphoserine" evidence="21">
    <location>
        <position position="94"/>
    </location>
</feature>
<feature type="modified residue" description="Phosphoserine" evidence="2">
    <location>
        <position position="1005"/>
    </location>
</feature>
<feature type="modified residue" description="Phosphothreonine" evidence="19">
    <location>
        <position position="1046"/>
    </location>
</feature>
<feature type="splice variant" id="VSP_011450" description="In isoform 5." evidence="15">
    <location>
        <begin position="224"/>
        <end position="523"/>
    </location>
</feature>
<feature type="splice variant" id="VSP_011451" description="In isoform 2, isoform 3 and isoform 4." evidence="13 14 15 16 17">
    <location>
        <begin position="440"/>
        <end position="467"/>
    </location>
</feature>
<feature type="splice variant" id="VSP_011452" description="In isoform 2, isoform 4 and isoform 5." evidence="13 14 15 16 17">
    <original>E</original>
    <variation>ESLTS</variation>
    <location>
        <position position="783"/>
    </location>
</feature>
<feature type="splice variant" id="VSP_011453" description="In isoform 4." evidence="13">
    <location>
        <begin position="830"/>
        <end position="873"/>
    </location>
</feature>
<feature type="splice variant" id="VSP_011454" description="In isoform 2, isoform 4 and isoform 5." evidence="13 14 15 16 17">
    <original>IIQPLLEL</original>
    <variation>DEEEGIWA</variation>
    <location>
        <begin position="1009"/>
        <end position="1016"/>
    </location>
</feature>
<feature type="splice variant" id="VSP_011455" description="In isoform 2, isoform 4 and isoform 5." evidence="13 14 15 16 17">
    <location>
        <begin position="1017"/>
        <end position="1116"/>
    </location>
</feature>
<feature type="sequence variant" id="VAR_051304" description="In dbSNP:rs35037408.">
    <original>S</original>
    <variation>G</variation>
    <location>
        <position position="50"/>
    </location>
</feature>
<feature type="sequence variant" id="VAR_051305" description="In dbSNP:rs12319376.">
    <original>T</original>
    <variation>A</variation>
    <location>
        <position position="1032"/>
    </location>
</feature>
<feature type="sequence conflict" description="In Ref. 8; BAA90975." evidence="18" ref="8">
    <original>L</original>
    <variation>G</variation>
    <location>
        <position position="828"/>
    </location>
</feature>
<feature type="sequence conflict" description="In Ref. 8; BAC03827." evidence="18" ref="8">
    <original>K</original>
    <variation>R</variation>
    <location>
        <position position="892"/>
    </location>
</feature>
<feature type="sequence conflict" description="In Ref. 8; BAC03827." evidence="18" ref="8">
    <original>T</original>
    <variation>I</variation>
    <location>
        <position position="910"/>
    </location>
</feature>
<feature type="sequence conflict" description="In Ref. 8; BAA90975." evidence="18" ref="8">
    <original>S</original>
    <variation>G</variation>
    <location>
        <position position="1021"/>
    </location>
</feature>
<proteinExistence type="evidence at protein level"/>
<reference key="1">
    <citation type="journal article" date="1999" name="Genes Chromosomes Cancer">
        <title>Fusion of a novel gene, ELKS, to RET due to translocation t(10;12)(q11;p13) in a papillary thyroid carcinoma.</title>
        <authorList>
            <person name="Nakata T."/>
            <person name="Kitamura Y."/>
            <person name="Shimizu K."/>
            <person name="Tanaka S."/>
            <person name="Fujimori M."/>
            <person name="Yokoyama S."/>
            <person name="Ito K."/>
            <person name="Emi M."/>
        </authorList>
    </citation>
    <scope>NUCLEOTIDE SEQUENCE [MRNA] (ISOFORM 4)</scope>
    <scope>CHROMOSOMAL TRANSLOCATION WITH RET</scope>
</reference>
<reference key="2">
    <citation type="journal article" date="2002" name="Genes Chromosomes Cancer">
        <title>Differential expression of multiple isoforms of the ELKS mRNAs involved in a papillary thyroid carcinoma.</title>
        <authorList>
            <person name="Nakata T."/>
            <person name="Yokota T."/>
            <person name="Emi M."/>
            <person name="Minami S."/>
        </authorList>
    </citation>
    <scope>NUCLEOTIDE SEQUENCE [MRNA] (ISOFORMS 1; 2; 3 AND 5)</scope>
    <scope>TISSUE SPECIFICITY</scope>
</reference>
<reference key="3">
    <citation type="submission" date="2005-09" db="EMBL/GenBank/DDBJ databases">
        <authorList>
            <person name="Mural R.J."/>
            <person name="Istrail S."/>
            <person name="Sutton G.G."/>
            <person name="Florea L."/>
            <person name="Halpern A.L."/>
            <person name="Mobarry C.M."/>
            <person name="Lippert R."/>
            <person name="Walenz B."/>
            <person name="Shatkay H."/>
            <person name="Dew I."/>
            <person name="Miller J.R."/>
            <person name="Flanigan M.J."/>
            <person name="Edwards N.J."/>
            <person name="Bolanos R."/>
            <person name="Fasulo D."/>
            <person name="Halldorsson B.V."/>
            <person name="Hannenhalli S."/>
            <person name="Turner R."/>
            <person name="Yooseph S."/>
            <person name="Lu F."/>
            <person name="Nusskern D.R."/>
            <person name="Shue B.C."/>
            <person name="Zheng X.H."/>
            <person name="Zhong F."/>
            <person name="Delcher A.L."/>
            <person name="Huson D.H."/>
            <person name="Kravitz S.A."/>
            <person name="Mouchard L."/>
            <person name="Reinert K."/>
            <person name="Remington K.A."/>
            <person name="Clark A.G."/>
            <person name="Waterman M.S."/>
            <person name="Eichler E.E."/>
            <person name="Adams M.D."/>
            <person name="Hunkapiller M.W."/>
            <person name="Myers E.W."/>
            <person name="Venter J.C."/>
        </authorList>
    </citation>
    <scope>NUCLEOTIDE SEQUENCE [LARGE SCALE GENOMIC DNA]</scope>
</reference>
<reference key="4">
    <citation type="journal article" date="2004" name="Genome Res.">
        <title>The status, quality, and expansion of the NIH full-length cDNA project: the Mammalian Gene Collection (MGC).</title>
        <authorList>
            <consortium name="The MGC Project Team"/>
        </authorList>
    </citation>
    <scope>NUCLEOTIDE SEQUENCE [LARGE SCALE MRNA] (ISOFORMS 1 AND 2)</scope>
    <scope>NUCLEOTIDE SEQUENCE [LARGE SCALE MRNA] OF 1-652 (ISOFORM 3)</scope>
    <source>
        <tissue>Brain</tissue>
        <tissue>Eye</tissue>
    </source>
</reference>
<reference key="5">
    <citation type="journal article" date="1999" name="DNA Res.">
        <title>Prediction of the coding sequences of unidentified human genes. XIV. The complete sequences of 100 new cDNA clones from brain which code for large proteins in vitro.</title>
        <authorList>
            <person name="Kikuno R."/>
            <person name="Nagase T."/>
            <person name="Ishikawa K."/>
            <person name="Hirosawa M."/>
            <person name="Miyajima N."/>
            <person name="Tanaka A."/>
            <person name="Kotani H."/>
            <person name="Nomura N."/>
            <person name="Ohara O."/>
        </authorList>
    </citation>
    <scope>NUCLEOTIDE SEQUENCE [LARGE SCALE MRNA] OF 1-1061 (ISOFORM 2)</scope>
    <source>
        <tissue>Brain</tissue>
    </source>
</reference>
<reference key="6">
    <citation type="journal article" date="2002" name="DNA Res.">
        <title>Construction of expression-ready cDNA clones for KIAA genes: manual curation of 330 KIAA cDNA clones.</title>
        <authorList>
            <person name="Nakajima D."/>
            <person name="Okazaki N."/>
            <person name="Yamakawa H."/>
            <person name="Kikuno R."/>
            <person name="Ohara O."/>
            <person name="Nagase T."/>
        </authorList>
    </citation>
    <scope>SEQUENCE REVISION</scope>
</reference>
<reference key="7">
    <citation type="submission" date="2008-12" db="UniProtKB">
        <authorList>
            <person name="Lubec G."/>
            <person name="Chen W.-Q."/>
            <person name="Sun Y."/>
        </authorList>
    </citation>
    <scope>PROTEIN SEQUENCE OF 254-269</scope>
    <scope>IDENTIFICATION BY MASS SPECTROMETRY</scope>
    <source>
        <tissue>Fetal brain cortex</tissue>
    </source>
</reference>
<reference key="8">
    <citation type="journal article" date="2004" name="Nat. Genet.">
        <title>Complete sequencing and characterization of 21,243 full-length human cDNAs.</title>
        <authorList>
            <person name="Ota T."/>
            <person name="Suzuki Y."/>
            <person name="Nishikawa T."/>
            <person name="Otsuki T."/>
            <person name="Sugiyama T."/>
            <person name="Irie R."/>
            <person name="Wakamatsu A."/>
            <person name="Hayashi K."/>
            <person name="Sato H."/>
            <person name="Nagai K."/>
            <person name="Kimura K."/>
            <person name="Makita H."/>
            <person name="Sekine M."/>
            <person name="Obayashi M."/>
            <person name="Nishi T."/>
            <person name="Shibahara T."/>
            <person name="Tanaka T."/>
            <person name="Ishii S."/>
            <person name="Yamamoto J."/>
            <person name="Saito K."/>
            <person name="Kawai Y."/>
            <person name="Isono Y."/>
            <person name="Nakamura Y."/>
            <person name="Nagahari K."/>
            <person name="Murakami K."/>
            <person name="Yasuda T."/>
            <person name="Iwayanagi T."/>
            <person name="Wagatsuma M."/>
            <person name="Shiratori A."/>
            <person name="Sudo H."/>
            <person name="Hosoiri T."/>
            <person name="Kaku Y."/>
            <person name="Kodaira H."/>
            <person name="Kondo H."/>
            <person name="Sugawara M."/>
            <person name="Takahashi M."/>
            <person name="Kanda K."/>
            <person name="Yokoi T."/>
            <person name="Furuya T."/>
            <person name="Kikkawa E."/>
            <person name="Omura Y."/>
            <person name="Abe K."/>
            <person name="Kamihara K."/>
            <person name="Katsuta N."/>
            <person name="Sato K."/>
            <person name="Tanikawa M."/>
            <person name="Yamazaki M."/>
            <person name="Ninomiya K."/>
            <person name="Ishibashi T."/>
            <person name="Yamashita H."/>
            <person name="Murakawa K."/>
            <person name="Fujimori K."/>
            <person name="Tanai H."/>
            <person name="Kimata M."/>
            <person name="Watanabe M."/>
            <person name="Hiraoka S."/>
            <person name="Chiba Y."/>
            <person name="Ishida S."/>
            <person name="Ono Y."/>
            <person name="Takiguchi S."/>
            <person name="Watanabe S."/>
            <person name="Yosida M."/>
            <person name="Hotuta T."/>
            <person name="Kusano J."/>
            <person name="Kanehori K."/>
            <person name="Takahashi-Fujii A."/>
            <person name="Hara H."/>
            <person name="Tanase T.-O."/>
            <person name="Nomura Y."/>
            <person name="Togiya S."/>
            <person name="Komai F."/>
            <person name="Hara R."/>
            <person name="Takeuchi K."/>
            <person name="Arita M."/>
            <person name="Imose N."/>
            <person name="Musashino K."/>
            <person name="Yuuki H."/>
            <person name="Oshima A."/>
            <person name="Sasaki N."/>
            <person name="Aotsuka S."/>
            <person name="Yoshikawa Y."/>
            <person name="Matsunawa H."/>
            <person name="Ichihara T."/>
            <person name="Shiohata N."/>
            <person name="Sano S."/>
            <person name="Moriya S."/>
            <person name="Momiyama H."/>
            <person name="Satoh N."/>
            <person name="Takami S."/>
            <person name="Terashima Y."/>
            <person name="Suzuki O."/>
            <person name="Nakagawa S."/>
            <person name="Senoh A."/>
            <person name="Mizoguchi H."/>
            <person name="Goto Y."/>
            <person name="Shimizu F."/>
            <person name="Wakebe H."/>
            <person name="Hishigaki H."/>
            <person name="Watanabe T."/>
            <person name="Sugiyama A."/>
            <person name="Takemoto M."/>
            <person name="Kawakami B."/>
            <person name="Yamazaki M."/>
            <person name="Watanabe K."/>
            <person name="Kumagai A."/>
            <person name="Itakura S."/>
            <person name="Fukuzumi Y."/>
            <person name="Fujimori Y."/>
            <person name="Komiyama M."/>
            <person name="Tashiro H."/>
            <person name="Tanigami A."/>
            <person name="Fujiwara T."/>
            <person name="Ono T."/>
            <person name="Yamada K."/>
            <person name="Fujii Y."/>
            <person name="Ozaki K."/>
            <person name="Hirao M."/>
            <person name="Ohmori Y."/>
            <person name="Kawabata A."/>
            <person name="Hikiji T."/>
            <person name="Kobatake N."/>
            <person name="Inagaki H."/>
            <person name="Ikema Y."/>
            <person name="Okamoto S."/>
            <person name="Okitani R."/>
            <person name="Kawakami T."/>
            <person name="Noguchi S."/>
            <person name="Itoh T."/>
            <person name="Shigeta K."/>
            <person name="Senba T."/>
            <person name="Matsumura K."/>
            <person name="Nakajima Y."/>
            <person name="Mizuno T."/>
            <person name="Morinaga M."/>
            <person name="Sasaki M."/>
            <person name="Togashi T."/>
            <person name="Oyama M."/>
            <person name="Hata H."/>
            <person name="Watanabe M."/>
            <person name="Komatsu T."/>
            <person name="Mizushima-Sugano J."/>
            <person name="Satoh T."/>
            <person name="Shirai Y."/>
            <person name="Takahashi Y."/>
            <person name="Nakagawa K."/>
            <person name="Okumura K."/>
            <person name="Nagase T."/>
            <person name="Nomura N."/>
            <person name="Kikuchi H."/>
            <person name="Masuho Y."/>
            <person name="Yamashita R."/>
            <person name="Nakai K."/>
            <person name="Yada T."/>
            <person name="Nakamura Y."/>
            <person name="Ohara O."/>
            <person name="Isogai T."/>
            <person name="Sugano S."/>
        </authorList>
    </citation>
    <scope>NUCLEOTIDE SEQUENCE [LARGE SCALE MRNA] OF 733-1116 (ISOFORM 2)</scope>
    <scope>NUCLEOTIDE SEQUENCE [LARGE SCALE MRNA] OF 828-1116 (ISOFORMS 1/3)</scope>
    <source>
        <tissue>Colon</tissue>
    </source>
</reference>
<reference key="9">
    <citation type="journal article" date="2004" name="Science">
        <title>Activation of transcription factor NF-kappaB requires ELKS, an IkappaB kinase regulatory subunit.</title>
        <authorList>
            <person name="Ducut Sigala J.L."/>
            <person name="Bottero V."/>
            <person name="Young D.B."/>
            <person name="Shevchenko A."/>
            <person name="Mercurio F."/>
            <person name="Verma I.M."/>
        </authorList>
    </citation>
    <scope>FUNCTION</scope>
    <scope>INTERACTION WITH CHUK; IKBKB; IKBKG AND NFKBIA</scope>
</reference>
<reference key="10">
    <citation type="journal article" date="2003" name="J. Biol. Chem.">
        <title>Interaction of the ERC family of RIM-binding proteins with the liprin-alpha family of multidomain proteins.</title>
        <authorList>
            <person name="Ko J."/>
            <person name="Na M."/>
            <person name="Kim S."/>
            <person name="Lee J.R."/>
            <person name="Kim E."/>
        </authorList>
    </citation>
    <scope>INTERACTION WITH PPFIA1</scope>
</reference>
<reference key="11">
    <citation type="journal article" date="2008" name="Proc. Natl. Acad. Sci. U.S.A.">
        <title>A quantitative atlas of mitotic phosphorylation.</title>
        <authorList>
            <person name="Dephoure N."/>
            <person name="Zhou C."/>
            <person name="Villen J."/>
            <person name="Beausoleil S.A."/>
            <person name="Bakalarski C.E."/>
            <person name="Elledge S.J."/>
            <person name="Gygi S.P."/>
        </authorList>
    </citation>
    <scope>PHOSPHORYLATION [LARGE SCALE ANALYSIS] AT SER-17; SER-21 AND THR-1046</scope>
    <scope>IDENTIFICATION BY MASS SPECTROMETRY [LARGE SCALE ANALYSIS]</scope>
    <source>
        <tissue>Cervix carcinoma</tissue>
    </source>
</reference>
<reference key="12">
    <citation type="journal article" date="2009" name="Sci. Signal.">
        <title>Quantitative phosphoproteomic analysis of T cell receptor signaling reveals system-wide modulation of protein-protein interactions.</title>
        <authorList>
            <person name="Mayya V."/>
            <person name="Lundgren D.H."/>
            <person name="Hwang S.-I."/>
            <person name="Rezaul K."/>
            <person name="Wu L."/>
            <person name="Eng J.K."/>
            <person name="Rodionov V."/>
            <person name="Han D.K."/>
        </authorList>
    </citation>
    <scope>PHOSPHORYLATION [LARGE SCALE ANALYSIS] AT SER-75</scope>
    <scope>IDENTIFICATION BY MASS SPECTROMETRY [LARGE SCALE ANALYSIS]</scope>
    <source>
        <tissue>Leukemic T-cell</tissue>
    </source>
</reference>
<reference key="13">
    <citation type="journal article" date="2010" name="Sci. Signal.">
        <title>Quantitative phosphoproteomics reveals widespread full phosphorylation site occupancy during mitosis.</title>
        <authorList>
            <person name="Olsen J.V."/>
            <person name="Vermeulen M."/>
            <person name="Santamaria A."/>
            <person name="Kumar C."/>
            <person name="Miller M.L."/>
            <person name="Jensen L.J."/>
            <person name="Gnad F."/>
            <person name="Cox J."/>
            <person name="Jensen T.S."/>
            <person name="Nigg E.A."/>
            <person name="Brunak S."/>
            <person name="Mann M."/>
        </authorList>
    </citation>
    <scope>PHOSPHORYLATION [LARGE SCALE ANALYSIS] AT SER-94</scope>
    <scope>IDENTIFICATION BY MASS SPECTROMETRY [LARGE SCALE ANALYSIS]</scope>
    <source>
        <tissue>Cervix carcinoma</tissue>
    </source>
</reference>
<reference key="14">
    <citation type="journal article" date="2011" name="BMC Syst. Biol.">
        <title>Initial characterization of the human central proteome.</title>
        <authorList>
            <person name="Burkard T.R."/>
            <person name="Planyavsky M."/>
            <person name="Kaupe I."/>
            <person name="Breitwieser F.P."/>
            <person name="Buerckstuemmer T."/>
            <person name="Bennett K.L."/>
            <person name="Superti-Furga G."/>
            <person name="Colinge J."/>
        </authorList>
    </citation>
    <scope>IDENTIFICATION BY MASS SPECTROMETRY [LARGE SCALE ANALYSIS]</scope>
</reference>
<reference key="15">
    <citation type="journal article" date="2011" name="Sci. Signal.">
        <title>System-wide temporal characterization of the proteome and phosphoproteome of human embryonic stem cell differentiation.</title>
        <authorList>
            <person name="Rigbolt K.T."/>
            <person name="Prokhorova T.A."/>
            <person name="Akimov V."/>
            <person name="Henningsen J."/>
            <person name="Johansen P.T."/>
            <person name="Kratchmarova I."/>
            <person name="Kassem M."/>
            <person name="Mann M."/>
            <person name="Olsen J.V."/>
            <person name="Blagoev B."/>
        </authorList>
    </citation>
    <scope>PHOSPHORYLATION [LARGE SCALE ANALYSIS] AT SER-37</scope>
    <scope>IDENTIFICATION BY MASS SPECTROMETRY [LARGE SCALE ANALYSIS]</scope>
</reference>
<reference key="16">
    <citation type="journal article" date="2013" name="J. Proteome Res.">
        <title>Toward a comprehensive characterization of a human cancer cell phosphoproteome.</title>
        <authorList>
            <person name="Zhou H."/>
            <person name="Di Palma S."/>
            <person name="Preisinger C."/>
            <person name="Peng M."/>
            <person name="Polat A.N."/>
            <person name="Heck A.J."/>
            <person name="Mohammed S."/>
        </authorList>
    </citation>
    <scope>PHOSPHORYLATION [LARGE SCALE ANALYSIS] AT SER-17 AND SER-21</scope>
    <scope>IDENTIFICATION BY MASS SPECTROMETRY [LARGE SCALE ANALYSIS]</scope>
    <source>
        <tissue>Cervix carcinoma</tissue>
        <tissue>Erythroleukemia</tissue>
    </source>
</reference>
<reference key="17">
    <citation type="journal article" date="2013" name="Dev. Cell">
        <title>CFEOM1-associated kinesin KIF21A is a cortical microtubule growth inhibitor.</title>
        <authorList>
            <person name="van der Vaart B."/>
            <person name="van Riel W.E."/>
            <person name="Doodhi H."/>
            <person name="Kevenaar J.T."/>
            <person name="Katrukha E.A."/>
            <person name="Gumy L."/>
            <person name="Bouchet B.P."/>
            <person name="Grigoriev I."/>
            <person name="Spangler S.A."/>
            <person name="Yu K.L."/>
            <person name="Wulf P.S."/>
            <person name="Wu J."/>
            <person name="Lansbergen G."/>
            <person name="van Battum E.Y."/>
            <person name="Pasterkamp R.J."/>
            <person name="Mimori-Kiyosue Y."/>
            <person name="Demmers J."/>
            <person name="Olieric N."/>
            <person name="Maly I.V."/>
            <person name="Hoogenraad C.C."/>
            <person name="Akhmanova A."/>
        </authorList>
    </citation>
    <scope>SUBUNIT</scope>
    <scope>INTERACTION WITH KANK1</scope>
</reference>
<reference key="18">
    <citation type="journal article" date="2014" name="J. Proteomics">
        <title>An enzyme assisted RP-RPLC approach for in-depth analysis of human liver phosphoproteome.</title>
        <authorList>
            <person name="Bian Y."/>
            <person name="Song C."/>
            <person name="Cheng K."/>
            <person name="Dong M."/>
            <person name="Wang F."/>
            <person name="Huang J."/>
            <person name="Sun D."/>
            <person name="Wang L."/>
            <person name="Ye M."/>
            <person name="Zou H."/>
        </authorList>
    </citation>
    <scope>PHOSPHORYLATION [LARGE SCALE ANALYSIS] AT SER-37 AND THR-38</scope>
    <scope>IDENTIFICATION BY MASS SPECTROMETRY [LARGE SCALE ANALYSIS]</scope>
    <source>
        <tissue>Liver</tissue>
    </source>
</reference>
<reference key="19">
    <citation type="journal article" date="2016" name="Elife">
        <title>Talin-KANK1 interaction controls the recruitment of cortical microtubule stabilizing complexes to focal adhesions.</title>
        <authorList>
            <person name="Bouchet B.P."/>
            <person name="Gough R.E."/>
            <person name="Ammon Y.C."/>
            <person name="van de Willige D."/>
            <person name="Post H."/>
            <person name="Jacquemet G."/>
            <person name="Altelaar A.M."/>
            <person name="Heck A.J."/>
            <person name="Goult B.T."/>
            <person name="Akhmanova A."/>
        </authorList>
    </citation>
    <scope>SUBUNIT</scope>
</reference>
<reference key="20">
    <citation type="journal article" date="2016" name="PLoS ONE">
        <title>SDCCAG8 interacts with RAB effector proteins RABEP2 and ERC1 and is required for Hedgehog Signaling.</title>
        <authorList>
            <person name="Airik R."/>
            <person name="Schueler M."/>
            <person name="Airik M."/>
            <person name="Cho J."/>
            <person name="Ulanowicz K.A."/>
            <person name="Porath J.D."/>
            <person name="Hurd T.W."/>
            <person name="Bekker-Jensen S."/>
            <person name="Schroeder J.M."/>
            <person name="Andersen J.S."/>
            <person name="Hildebrandt F."/>
        </authorList>
    </citation>
    <scope>SUBCELLULAR LOCATION</scope>
    <scope>INTERACTION WITH SDCCAG8</scope>
</reference>
<gene>
    <name type="primary">ERC1</name>
    <name type="synonym">ELKS</name>
    <name type="synonym">KIAA1081</name>
    <name type="synonym">RAB6IP2</name>
</gene>
<protein>
    <recommendedName>
        <fullName>ELKS/Rab6-interacting/CAST family member 1</fullName>
        <shortName>ERC-1</shortName>
    </recommendedName>
    <alternativeName>
        <fullName>Rab6-interacting protein 2</fullName>
    </alternativeName>
</protein>
<name>RB6I2_HUMAN</name>
<keyword id="KW-0007">Acetylation</keyword>
<keyword id="KW-0025">Alternative splicing</keyword>
<keyword id="KW-0965">Cell junction</keyword>
<keyword id="KW-1003">Cell membrane</keyword>
<keyword id="KW-0966">Cell projection</keyword>
<keyword id="KW-0160">Chromosomal rearrangement</keyword>
<keyword id="KW-0175">Coiled coil</keyword>
<keyword id="KW-0963">Cytoplasm</keyword>
<keyword id="KW-0206">Cytoskeleton</keyword>
<keyword id="KW-0903">Direct protein sequencing</keyword>
<keyword id="KW-0333">Golgi apparatus</keyword>
<keyword id="KW-0472">Membrane</keyword>
<keyword id="KW-0597">Phosphoprotein</keyword>
<keyword id="KW-0653">Protein transport</keyword>
<keyword id="KW-1267">Proteomics identification</keyword>
<keyword id="KW-1185">Reference proteome</keyword>
<keyword id="KW-0770">Synapse</keyword>
<keyword id="KW-0813">Transport</keyword>
<dbReference type="EMBL" id="AB015617">
    <property type="protein sequence ID" value="BAA88763.1"/>
    <property type="molecule type" value="mRNA"/>
</dbReference>
<dbReference type="EMBL" id="AB053469">
    <property type="protein sequence ID" value="BAC54108.1"/>
    <property type="molecule type" value="mRNA"/>
</dbReference>
<dbReference type="EMBL" id="AB053468">
    <property type="protein sequence ID" value="BAC54107.1"/>
    <property type="molecule type" value="mRNA"/>
</dbReference>
<dbReference type="EMBL" id="AB053470">
    <property type="protein sequence ID" value="BAC54109.1"/>
    <property type="molecule type" value="mRNA"/>
</dbReference>
<dbReference type="EMBL" id="AB053471">
    <property type="protein sequence ID" value="BAC54110.1"/>
    <property type="molecule type" value="mRNA"/>
</dbReference>
<dbReference type="EMBL" id="CH471116">
    <property type="protein sequence ID" value="EAW88932.1"/>
    <property type="molecule type" value="Genomic_DNA"/>
</dbReference>
<dbReference type="EMBL" id="CH471116">
    <property type="protein sequence ID" value="EAW88934.1"/>
    <property type="molecule type" value="Genomic_DNA"/>
</dbReference>
<dbReference type="EMBL" id="CH471116">
    <property type="protein sequence ID" value="EAW88936.1"/>
    <property type="molecule type" value="Genomic_DNA"/>
</dbReference>
<dbReference type="EMBL" id="CH471116">
    <property type="protein sequence ID" value="EAW88938.1"/>
    <property type="molecule type" value="Genomic_DNA"/>
</dbReference>
<dbReference type="EMBL" id="BC068006">
    <property type="protein sequence ID" value="AAH68006.1"/>
    <property type="status" value="ALT_SEQ"/>
    <property type="molecule type" value="mRNA"/>
</dbReference>
<dbReference type="EMBL" id="BC132782">
    <property type="protein sequence ID" value="AAI32783.1"/>
    <property type="molecule type" value="mRNA"/>
</dbReference>
<dbReference type="EMBL" id="BC132784">
    <property type="protein sequence ID" value="AAI32785.1"/>
    <property type="molecule type" value="mRNA"/>
</dbReference>
<dbReference type="EMBL" id="BC150248">
    <property type="protein sequence ID" value="AAI50249.1"/>
    <property type="molecule type" value="mRNA"/>
</dbReference>
<dbReference type="EMBL" id="AB029004">
    <property type="protein sequence ID" value="BAA83033.2"/>
    <property type="status" value="ALT_INIT"/>
    <property type="molecule type" value="mRNA"/>
</dbReference>
<dbReference type="EMBL" id="AK000148">
    <property type="protein sequence ID" value="BAA90975.1"/>
    <property type="status" value="ALT_INIT"/>
    <property type="molecule type" value="mRNA"/>
</dbReference>
<dbReference type="EMBL" id="AK092201">
    <property type="protein sequence ID" value="BAC03827.1"/>
    <property type="molecule type" value="mRNA"/>
</dbReference>
<dbReference type="CCDS" id="CCDS53732.1">
    <molecule id="Q8IUD2-3"/>
</dbReference>
<dbReference type="CCDS" id="CCDS8508.1">
    <molecule id="Q8IUD2-1"/>
</dbReference>
<dbReference type="RefSeq" id="NP_829883.1">
    <molecule id="Q8IUD2-3"/>
    <property type="nucleotide sequence ID" value="NM_178039.4"/>
</dbReference>
<dbReference type="RefSeq" id="NP_829884.1">
    <molecule id="Q8IUD2-1"/>
    <property type="nucleotide sequence ID" value="NM_178040.4"/>
</dbReference>
<dbReference type="RefSeq" id="XP_011519243.1">
    <property type="nucleotide sequence ID" value="XM_011520941.2"/>
</dbReference>
<dbReference type="RefSeq" id="XP_016874553.1">
    <molecule id="Q8IUD2-1"/>
    <property type="nucleotide sequence ID" value="XM_017019064.2"/>
</dbReference>
<dbReference type="RefSeq" id="XP_016874556.1">
    <molecule id="Q8IUD2-3"/>
    <property type="nucleotide sequence ID" value="XM_017019067.2"/>
</dbReference>
<dbReference type="RefSeq" id="XP_047284521.1">
    <molecule id="Q8IUD2-1"/>
    <property type="nucleotide sequence ID" value="XM_047428565.1"/>
</dbReference>
<dbReference type="RefSeq" id="XP_047284522.1">
    <molecule id="Q8IUD2-1"/>
    <property type="nucleotide sequence ID" value="XM_047428566.1"/>
</dbReference>
<dbReference type="RefSeq" id="XP_047284523.1">
    <molecule id="Q8IUD2-1"/>
    <property type="nucleotide sequence ID" value="XM_047428567.1"/>
</dbReference>
<dbReference type="RefSeq" id="XP_047284530.1">
    <molecule id="Q8IUD2-3"/>
    <property type="nucleotide sequence ID" value="XM_047428574.1"/>
</dbReference>
<dbReference type="RefSeq" id="XP_047284531.1">
    <molecule id="Q8IUD2-3"/>
    <property type="nucleotide sequence ID" value="XM_047428575.1"/>
</dbReference>
<dbReference type="RefSeq" id="XP_047284532.1">
    <molecule id="Q8IUD2-3"/>
    <property type="nucleotide sequence ID" value="XM_047428576.1"/>
</dbReference>
<dbReference type="RefSeq" id="XP_054227483.1">
    <molecule id="Q8IUD2-1"/>
    <property type="nucleotide sequence ID" value="XM_054371508.1"/>
</dbReference>
<dbReference type="RefSeq" id="XP_054227484.1">
    <molecule id="Q8IUD2-1"/>
    <property type="nucleotide sequence ID" value="XM_054371509.1"/>
</dbReference>
<dbReference type="RefSeq" id="XP_054227485.1">
    <molecule id="Q8IUD2-1"/>
    <property type="nucleotide sequence ID" value="XM_054371510.1"/>
</dbReference>
<dbReference type="RefSeq" id="XP_054227493.1">
    <molecule id="Q8IUD2-3"/>
    <property type="nucleotide sequence ID" value="XM_054371518.1"/>
</dbReference>
<dbReference type="RefSeq" id="XP_054227494.1">
    <molecule id="Q8IUD2-3"/>
    <property type="nucleotide sequence ID" value="XM_054371519.1"/>
</dbReference>
<dbReference type="RefSeq" id="XP_054227495.1">
    <molecule id="Q8IUD2-3"/>
    <property type="nucleotide sequence ID" value="XM_054371520.1"/>
</dbReference>
<dbReference type="RefSeq" id="XP_054227507.1">
    <molecule id="Q8IUD2-2"/>
    <property type="nucleotide sequence ID" value="XM_054371532.1"/>
</dbReference>
<dbReference type="RefSeq" id="XP_054227510.1">
    <molecule id="Q8IUD2-4"/>
    <property type="nucleotide sequence ID" value="XM_054371535.1"/>
</dbReference>
<dbReference type="SMR" id="Q8IUD2"/>
<dbReference type="BioGRID" id="116714">
    <property type="interactions" value="199"/>
</dbReference>
<dbReference type="CORUM" id="Q8IUD2"/>
<dbReference type="FunCoup" id="Q8IUD2">
    <property type="interactions" value="1427"/>
</dbReference>
<dbReference type="IntAct" id="Q8IUD2">
    <property type="interactions" value="102"/>
</dbReference>
<dbReference type="MINT" id="Q8IUD2"/>
<dbReference type="STRING" id="9606.ENSP00000354158"/>
<dbReference type="GlyGen" id="Q8IUD2">
    <property type="glycosylation" value="8 sites, 1 N-linked glycan (1 site), 1 O-linked glycan (7 sites)"/>
</dbReference>
<dbReference type="iPTMnet" id="Q8IUD2"/>
<dbReference type="MetOSite" id="Q8IUD2"/>
<dbReference type="PhosphoSitePlus" id="Q8IUD2"/>
<dbReference type="BioMuta" id="ERC1"/>
<dbReference type="DMDM" id="51827892"/>
<dbReference type="jPOST" id="Q8IUD2"/>
<dbReference type="MassIVE" id="Q8IUD2"/>
<dbReference type="PaxDb" id="9606-ENSP00000468263"/>
<dbReference type="PeptideAtlas" id="Q8IUD2"/>
<dbReference type="ProteomicsDB" id="70547">
    <molecule id="Q8IUD2-1"/>
</dbReference>
<dbReference type="ProteomicsDB" id="70548">
    <molecule id="Q8IUD2-2"/>
</dbReference>
<dbReference type="ProteomicsDB" id="70549">
    <molecule id="Q8IUD2-3"/>
</dbReference>
<dbReference type="ProteomicsDB" id="70550">
    <molecule id="Q8IUD2-4"/>
</dbReference>
<dbReference type="ProteomicsDB" id="70551">
    <molecule id="Q8IUD2-5"/>
</dbReference>
<dbReference type="Pumba" id="Q8IUD2"/>
<dbReference type="Antibodypedia" id="10295">
    <property type="antibodies" value="174 antibodies from 32 providers"/>
</dbReference>
<dbReference type="DNASU" id="23085"/>
<dbReference type="Ensembl" id="ENST00000347735.10">
    <molecule id="Q8IUD2-4"/>
    <property type="protein sequence ID" value="ENSP00000340054.6"/>
    <property type="gene ID" value="ENSG00000082805.21"/>
</dbReference>
<dbReference type="Ensembl" id="ENST00000360905.9">
    <molecule id="Q8IUD2-1"/>
    <property type="protein sequence ID" value="ENSP00000354158.3"/>
    <property type="gene ID" value="ENSG00000082805.21"/>
</dbReference>
<dbReference type="Ensembl" id="ENST00000397203.7">
    <molecule id="Q8IUD2-1"/>
    <property type="protein sequence ID" value="ENSP00000380386.4"/>
    <property type="gene ID" value="ENSG00000082805.21"/>
</dbReference>
<dbReference type="Ensembl" id="ENST00000440394.7">
    <molecule id="Q8IUD2-2"/>
    <property type="protein sequence ID" value="ENSP00000410064.2"/>
    <property type="gene ID" value="ENSG00000082805.21"/>
</dbReference>
<dbReference type="Ensembl" id="ENST00000543086.7">
    <molecule id="Q8IUD2-3"/>
    <property type="protein sequence ID" value="ENSP00000438546.1"/>
    <property type="gene ID" value="ENSG00000082805.21"/>
</dbReference>
<dbReference type="Ensembl" id="ENST00000545948.5">
    <molecule id="Q8IUD2-5"/>
    <property type="protein sequence ID" value="ENSP00000442976.1"/>
    <property type="gene ID" value="ENSG00000082805.21"/>
</dbReference>
<dbReference type="Ensembl" id="ENST00000589028.6">
    <molecule id="Q8IUD2-1"/>
    <property type="protein sequence ID" value="ENSP00000468263.1"/>
    <property type="gene ID" value="ENSG00000082805.21"/>
</dbReference>
<dbReference type="GeneID" id="23085"/>
<dbReference type="KEGG" id="hsa:23085"/>
<dbReference type="MANE-Select" id="ENST00000360905.9">
    <property type="protein sequence ID" value="ENSP00000354158.3"/>
    <property type="RefSeq nucleotide sequence ID" value="NM_178040.4"/>
    <property type="RefSeq protein sequence ID" value="NP_829884.1"/>
</dbReference>
<dbReference type="UCSC" id="uc001qjb.3">
    <molecule id="Q8IUD2-1"/>
    <property type="organism name" value="human"/>
</dbReference>
<dbReference type="AGR" id="HGNC:17072"/>
<dbReference type="CTD" id="23085"/>
<dbReference type="DisGeNET" id="23085"/>
<dbReference type="GeneCards" id="ERC1"/>
<dbReference type="HGNC" id="HGNC:17072">
    <property type="gene designation" value="ERC1"/>
</dbReference>
<dbReference type="HPA" id="ENSG00000082805">
    <property type="expression patterns" value="Low tissue specificity"/>
</dbReference>
<dbReference type="MalaCards" id="ERC1"/>
<dbReference type="MIM" id="607127">
    <property type="type" value="gene"/>
</dbReference>
<dbReference type="neXtProt" id="NX_Q8IUD2"/>
<dbReference type="OpenTargets" id="ENSG00000082805"/>
<dbReference type="Orphanet" id="146">
    <property type="disease" value="Differentiated thyroid carcinoma"/>
</dbReference>
<dbReference type="Orphanet" id="280325">
    <property type="disease" value="Distal deletion 12p syndrome"/>
</dbReference>
<dbReference type="PharmGKB" id="PA134970875"/>
<dbReference type="VEuPathDB" id="HostDB:ENSG00000082805"/>
<dbReference type="eggNOG" id="KOG4809">
    <property type="taxonomic scope" value="Eukaryota"/>
</dbReference>
<dbReference type="GeneTree" id="ENSGT00650000093320"/>
<dbReference type="HOGENOM" id="CLU_009304_0_0_1"/>
<dbReference type="InParanoid" id="Q8IUD2"/>
<dbReference type="OrthoDB" id="2019763at2759"/>
<dbReference type="PAN-GO" id="Q8IUD2">
    <property type="GO annotations" value="5 GO annotations based on evolutionary models"/>
</dbReference>
<dbReference type="PhylomeDB" id="Q8IUD2"/>
<dbReference type="TreeFam" id="TF324969"/>
<dbReference type="PathwayCommons" id="Q8IUD2"/>
<dbReference type="SignaLink" id="Q8IUD2"/>
<dbReference type="SIGNOR" id="Q8IUD2"/>
<dbReference type="BioGRID-ORCS" id="23085">
    <property type="hits" value="9 hits in 1159 CRISPR screens"/>
</dbReference>
<dbReference type="CD-CODE" id="F345034F">
    <property type="entry name" value="Signaling cluster"/>
</dbReference>
<dbReference type="CD-CODE" id="FB4E32DD">
    <property type="entry name" value="Presynaptic clusters and postsynaptic densities"/>
</dbReference>
<dbReference type="ChiTaRS" id="ERC1">
    <property type="organism name" value="human"/>
</dbReference>
<dbReference type="GeneWiki" id="ERC1"/>
<dbReference type="GenomeRNAi" id="23085"/>
<dbReference type="Pharos" id="Q8IUD2">
    <property type="development level" value="Tbio"/>
</dbReference>
<dbReference type="PRO" id="PR:Q8IUD2"/>
<dbReference type="Proteomes" id="UP000005640">
    <property type="component" value="Chromosome 12"/>
</dbReference>
<dbReference type="RNAct" id="Q8IUD2">
    <property type="molecule type" value="protein"/>
</dbReference>
<dbReference type="Bgee" id="ENSG00000082805">
    <property type="expression patterns" value="Expressed in sural nerve and 198 other cell types or tissues"/>
</dbReference>
<dbReference type="ExpressionAtlas" id="Q8IUD2">
    <property type="expression patterns" value="baseline and differential"/>
</dbReference>
<dbReference type="GO" id="GO:0070161">
    <property type="term" value="C:anchoring junction"/>
    <property type="evidence" value="ECO:0007669"/>
    <property type="project" value="UniProtKB-KW"/>
</dbReference>
<dbReference type="GO" id="GO:0005813">
    <property type="term" value="C:centrosome"/>
    <property type="evidence" value="ECO:0000314"/>
    <property type="project" value="UniProtKB"/>
</dbReference>
<dbReference type="GO" id="GO:0036064">
    <property type="term" value="C:ciliary basal body"/>
    <property type="evidence" value="ECO:0000314"/>
    <property type="project" value="UniProtKB"/>
</dbReference>
<dbReference type="GO" id="GO:0005737">
    <property type="term" value="C:cytoplasm"/>
    <property type="evidence" value="ECO:0000314"/>
    <property type="project" value="UniProtKB"/>
</dbReference>
<dbReference type="GO" id="GO:0000139">
    <property type="term" value="C:Golgi membrane"/>
    <property type="evidence" value="ECO:0007669"/>
    <property type="project" value="UniProtKB-SubCell"/>
</dbReference>
<dbReference type="GO" id="GO:0008385">
    <property type="term" value="C:IkappaB kinase complex"/>
    <property type="evidence" value="ECO:0000314"/>
    <property type="project" value="UniProtKB"/>
</dbReference>
<dbReference type="GO" id="GO:0002102">
    <property type="term" value="C:podosome"/>
    <property type="evidence" value="ECO:0000250"/>
    <property type="project" value="UniProtKB"/>
</dbReference>
<dbReference type="GO" id="GO:0098831">
    <property type="term" value="C:presynaptic active zone cytoplasmic component"/>
    <property type="evidence" value="ECO:0000318"/>
    <property type="project" value="GO_Central"/>
</dbReference>
<dbReference type="GO" id="GO:0042734">
    <property type="term" value="C:presynaptic membrane"/>
    <property type="evidence" value="ECO:0000304"/>
    <property type="project" value="UniProtKB"/>
</dbReference>
<dbReference type="GO" id="GO:0045202">
    <property type="term" value="C:synapse"/>
    <property type="evidence" value="ECO:0000250"/>
    <property type="project" value="ParkinsonsUK-UCL"/>
</dbReference>
<dbReference type="GO" id="GO:0045296">
    <property type="term" value="F:cadherin binding"/>
    <property type="evidence" value="ECO:0007005"/>
    <property type="project" value="BHF-UCL"/>
</dbReference>
<dbReference type="GO" id="GO:0030165">
    <property type="term" value="F:PDZ domain binding"/>
    <property type="evidence" value="ECO:0000250"/>
    <property type="project" value="ParkinsonsUK-UCL"/>
</dbReference>
<dbReference type="GO" id="GO:0031267">
    <property type="term" value="F:small GTPase binding"/>
    <property type="evidence" value="ECO:0000250"/>
    <property type="project" value="ParkinsonsUK-UCL"/>
</dbReference>
<dbReference type="GO" id="GO:0098882">
    <property type="term" value="F:structural constituent of presynaptic active zone"/>
    <property type="evidence" value="ECO:0000318"/>
    <property type="project" value="GO_Central"/>
</dbReference>
<dbReference type="GO" id="GO:0007252">
    <property type="term" value="P:I-kappaB phosphorylation"/>
    <property type="evidence" value="ECO:0000314"/>
    <property type="project" value="UniProtKB"/>
</dbReference>
<dbReference type="GO" id="GO:0048790">
    <property type="term" value="P:maintenance of presynaptic active zone structure"/>
    <property type="evidence" value="ECO:0000318"/>
    <property type="project" value="GO_Central"/>
</dbReference>
<dbReference type="GO" id="GO:0051092">
    <property type="term" value="P:positive regulation of NF-kappaB transcription factor activity"/>
    <property type="evidence" value="ECO:0000314"/>
    <property type="project" value="UniProtKB"/>
</dbReference>
<dbReference type="GO" id="GO:0015031">
    <property type="term" value="P:protein transport"/>
    <property type="evidence" value="ECO:0007669"/>
    <property type="project" value="UniProtKB-KW"/>
</dbReference>
<dbReference type="GO" id="GO:0006355">
    <property type="term" value="P:regulation of DNA-templated transcription"/>
    <property type="evidence" value="ECO:0000314"/>
    <property type="project" value="UniProtKB"/>
</dbReference>
<dbReference type="GO" id="GO:0042147">
    <property type="term" value="P:retrograde transport, endosome to Golgi"/>
    <property type="evidence" value="ECO:0000250"/>
    <property type="project" value="ParkinsonsUK-UCL"/>
</dbReference>
<dbReference type="FunFam" id="1.20.5.2440:FF:000005">
    <property type="entry name" value="ELKS/Rab6-interacting/CAST family member 1 isoform X1"/>
    <property type="match status" value="1"/>
</dbReference>
<dbReference type="Gene3D" id="1.10.287.1490">
    <property type="match status" value="1"/>
</dbReference>
<dbReference type="Gene3D" id="1.20.5.2440">
    <property type="match status" value="1"/>
</dbReference>
<dbReference type="Gene3D" id="1.20.5.340">
    <property type="match status" value="1"/>
</dbReference>
<dbReference type="InterPro" id="IPR019323">
    <property type="entry name" value="ELKS/CAST"/>
</dbReference>
<dbReference type="InterPro" id="IPR037245">
    <property type="entry name" value="FIP-RBD_C_sf"/>
</dbReference>
<dbReference type="InterPro" id="IPR019018">
    <property type="entry name" value="Rab-bd_FIP-RBD"/>
</dbReference>
<dbReference type="PANTHER" id="PTHR18861">
    <property type="entry name" value="ELKS/RAB6-INTERACTING/CAST PROTEIN"/>
    <property type="match status" value="1"/>
</dbReference>
<dbReference type="PANTHER" id="PTHR18861:SF1">
    <property type="entry name" value="ELKS_RAB6-INTERACTING_CAST FAMILY MEMBER 1"/>
    <property type="match status" value="1"/>
</dbReference>
<dbReference type="Pfam" id="PF10174">
    <property type="entry name" value="Cast"/>
    <property type="match status" value="3"/>
</dbReference>
<dbReference type="Pfam" id="PF09457">
    <property type="entry name" value="RBD-FIP"/>
    <property type="match status" value="1"/>
</dbReference>
<dbReference type="SUPFAM" id="SSF144270">
    <property type="entry name" value="Eferin C-derminal domain-like"/>
    <property type="match status" value="1"/>
</dbReference>
<dbReference type="SUPFAM" id="SSF90257">
    <property type="entry name" value="Myosin rod fragments"/>
    <property type="match status" value="1"/>
</dbReference>
<dbReference type="SUPFAM" id="SSF57997">
    <property type="entry name" value="Tropomyosin"/>
    <property type="match status" value="1"/>
</dbReference>
<dbReference type="PROSITE" id="PS51511">
    <property type="entry name" value="FIP_RBD"/>
    <property type="match status" value="1"/>
</dbReference>
<accession>Q8IUD2</accession>
<accession>A2RU77</accession>
<accession>A7E295</accession>
<accession>D3DUP7</accession>
<accession>D3DUP8</accession>
<accession>Q6NVK2</accession>
<accession>Q8IUD3</accession>
<accession>Q8IUD4</accession>
<accession>Q8IUD5</accession>
<accession>Q8NAS1</accession>
<accession>Q9NXN5</accession>
<accession>Q9UIK7</accession>
<accession>Q9UPS1</accession>
<evidence type="ECO:0000250" key="1"/>
<evidence type="ECO:0000250" key="2">
    <source>
        <dbReference type="UniProtKB" id="Q811U3"/>
    </source>
</evidence>
<evidence type="ECO:0000250" key="3">
    <source>
        <dbReference type="UniProtKB" id="Q99MI1"/>
    </source>
</evidence>
<evidence type="ECO:0000255" key="4"/>
<evidence type="ECO:0000255" key="5">
    <source>
        <dbReference type="PROSITE-ProRule" id="PRU00844"/>
    </source>
</evidence>
<evidence type="ECO:0000256" key="6">
    <source>
        <dbReference type="SAM" id="MobiDB-lite"/>
    </source>
</evidence>
<evidence type="ECO:0000269" key="7">
    <source>
    </source>
</evidence>
<evidence type="ECO:0000269" key="8">
    <source>
    </source>
</evidence>
<evidence type="ECO:0000269" key="9">
    <source>
    </source>
</evidence>
<evidence type="ECO:0000269" key="10">
    <source>
    </source>
</evidence>
<evidence type="ECO:0000269" key="11">
    <source>
    </source>
</evidence>
<evidence type="ECO:0000269" key="12">
    <source>
    </source>
</evidence>
<evidence type="ECO:0000303" key="13">
    <source>
    </source>
</evidence>
<evidence type="ECO:0000303" key="14">
    <source>
    </source>
</evidence>
<evidence type="ECO:0000303" key="15">
    <source>
    </source>
</evidence>
<evidence type="ECO:0000303" key="16">
    <source>
    </source>
</evidence>
<evidence type="ECO:0000303" key="17">
    <source>
    </source>
</evidence>
<evidence type="ECO:0000305" key="18"/>
<evidence type="ECO:0007744" key="19">
    <source>
    </source>
</evidence>
<evidence type="ECO:0007744" key="20">
    <source>
    </source>
</evidence>
<evidence type="ECO:0007744" key="21">
    <source>
    </source>
</evidence>
<evidence type="ECO:0007744" key="22">
    <source>
    </source>
</evidence>
<evidence type="ECO:0007744" key="23">
    <source>
    </source>
</evidence>
<evidence type="ECO:0007744" key="24">
    <source>
    </source>
</evidence>